<protein>
    <recommendedName>
        <fullName evidence="5">Probable lysophospholipase BODYGUARD 5</fullName>
        <shortName evidence="5">AtBDG5</shortName>
        <ecNumber evidence="6">3.1.1.-</ecNumber>
    </recommendedName>
</protein>
<proteinExistence type="inferred from homology"/>
<keyword id="KW-1003">Cell membrane</keyword>
<keyword id="KW-0134">Cell wall</keyword>
<keyword id="KW-0961">Cell wall biogenesis/degradation</keyword>
<keyword id="KW-0378">Hydrolase</keyword>
<keyword id="KW-0449">Lipoprotein</keyword>
<keyword id="KW-0472">Membrane</keyword>
<keyword id="KW-0564">Palmitate</keyword>
<keyword id="KW-1185">Reference proteome</keyword>
<keyword id="KW-0964">Secreted</keyword>
<keyword id="KW-0732">Signal</keyword>
<organism>
    <name type="scientific">Arabidopsis thaliana</name>
    <name type="common">Mouse-ear cress</name>
    <dbReference type="NCBI Taxonomy" id="3702"/>
    <lineage>
        <taxon>Eukaryota</taxon>
        <taxon>Viridiplantae</taxon>
        <taxon>Streptophyta</taxon>
        <taxon>Embryophyta</taxon>
        <taxon>Tracheophyta</taxon>
        <taxon>Spermatophyta</taxon>
        <taxon>Magnoliopsida</taxon>
        <taxon>eudicotyledons</taxon>
        <taxon>Gunneridae</taxon>
        <taxon>Pentapetalae</taxon>
        <taxon>rosids</taxon>
        <taxon>malvids</taxon>
        <taxon>Brassicales</taxon>
        <taxon>Brassicaceae</taxon>
        <taxon>Camelineae</taxon>
        <taxon>Arabidopsis</taxon>
    </lineage>
</organism>
<reference key="1">
    <citation type="journal article" date="1997" name="DNA Res.">
        <title>Structural analysis of Arabidopsis thaliana chromosome 5. II. Sequence features of the regions of 1,044,062 bp covered by thirteen physically assigned P1 clones.</title>
        <authorList>
            <person name="Kotani H."/>
            <person name="Nakamura Y."/>
            <person name="Sato S."/>
            <person name="Kaneko T."/>
            <person name="Asamizu E."/>
            <person name="Miyajima N."/>
            <person name="Tabata S."/>
        </authorList>
    </citation>
    <scope>NUCLEOTIDE SEQUENCE [LARGE SCALE GENOMIC DNA]</scope>
    <source>
        <strain>cv. Columbia</strain>
    </source>
</reference>
<reference key="2">
    <citation type="journal article" date="2017" name="Plant J.">
        <title>Araport11: a complete reannotation of the Arabidopsis thaliana reference genome.</title>
        <authorList>
            <person name="Cheng C.Y."/>
            <person name="Krishnakumar V."/>
            <person name="Chan A.P."/>
            <person name="Thibaud-Nissen F."/>
            <person name="Schobel S."/>
            <person name="Town C.D."/>
        </authorList>
    </citation>
    <scope>GENOME REANNOTATION</scope>
    <source>
        <strain>cv. Columbia</strain>
    </source>
</reference>
<reference key="3">
    <citation type="journal article" date="2006" name="Plant Cell">
        <title>The epidermis-specific extracellular BODYGUARD controls cuticle development and morphogenesis in Arabidopsis.</title>
        <authorList>
            <person name="Kurdyukov S."/>
            <person name="Faust A."/>
            <person name="Nawrath C."/>
            <person name="Baer S."/>
            <person name="Voisin D."/>
            <person name="Efremova N."/>
            <person name="Franke R."/>
            <person name="Schreiber L."/>
            <person name="Saedler H."/>
            <person name="Metraux J.-P."/>
            <person name="Yephremov A."/>
        </authorList>
    </citation>
    <scope>GENE FAMILY</scope>
    <scope>NOMENCLATURE</scope>
    <source>
        <strain>cv. Columbia</strain>
    </source>
</reference>
<reference key="4">
    <citation type="journal article" date="2013" name="Arabidopsis Book">
        <title>Acyl-lipid metabolism.</title>
        <authorList>
            <person name="Li-Beisson Y."/>
            <person name="Shorrosh B."/>
            <person name="Beisson F."/>
            <person name="Andersson M.X."/>
            <person name="Arondel V."/>
            <person name="Bates P.D."/>
            <person name="Baud S."/>
            <person name="Bird D."/>
            <person name="Debono A."/>
            <person name="Durrett T.P."/>
            <person name="Franke R.B."/>
            <person name="Graham I.A."/>
            <person name="Katayama K."/>
            <person name="Kelly A.A."/>
            <person name="Larson T."/>
            <person name="Markham J.E."/>
            <person name="Miquel M."/>
            <person name="Molina I."/>
            <person name="Nishida I."/>
            <person name="Rowland O."/>
            <person name="Samuels L."/>
            <person name="Schmid K.M."/>
            <person name="Wada H."/>
            <person name="Welti R."/>
            <person name="Xu C."/>
            <person name="Zallot R."/>
            <person name="Ohlrogge J."/>
        </authorList>
    </citation>
    <scope>REVIEW</scope>
</reference>
<gene>
    <name evidence="5" type="primary">BDG5</name>
    <name evidence="7" type="ordered locus">At5g17720</name>
    <name evidence="8" type="ORF">MVA3.7</name>
</gene>
<sequence length="443" mass="50180">MITSSFSEKCTSVINGAPSWAVFFLFDLLDYFLCIVFRFLDEVMEEKSESCHCNNPREKTHFAEYEFLSETLYRRRNVFRQAGFLRFANKLPEITKKIGIVTFLRKFLFPHTMNKVSHEVANRWSDCGCKTCVSWINTDKLNVIVKQPSISDLSISNKPVENVIFVHGFLASSSFWTNTVFKYLPETTEGTNYRFFAIDLLGFGDSPKPRASQYSLKEHVEMIEKSVILPNNLTSFHVVAHSMGCIIGIALAAKFSDSVKSVALVAPPYFADSKGGASCAALDVVAKKKLWPPASFFTAMMCWYEHIGRGVCLVFCRHHRTWERIIKIVTWRRKLPTAIMDFTKHTHQSGWHSMHNVICGGAKFTDKHLETLIKSGVKINVMQGDKDVVVPIDCLSNMKGKFPAVEVEVIAGTDHSTVIMSRREVFAANLVSLWATSEKKQKV</sequence>
<feature type="signal peptide" evidence="3">
    <location>
        <begin position="1"/>
        <end position="52"/>
    </location>
</feature>
<feature type="chain" id="PRO_0000437272" description="Probable lysophospholipase BODYGUARD 5">
    <location>
        <begin position="53"/>
        <end position="443"/>
    </location>
</feature>
<feature type="domain" description="AB hydrolase-1" evidence="3">
    <location>
        <begin position="163"/>
        <end position="268"/>
    </location>
</feature>
<feature type="active site" evidence="3">
    <location>
        <position position="167"/>
    </location>
</feature>
<feature type="active site" description="Nucleophile" evidence="1">
    <location>
        <position position="242"/>
    </location>
</feature>
<feature type="active site" description="Charge relay system" evidence="1">
    <location>
        <position position="387"/>
    </location>
</feature>
<feature type="active site" description="Charge relay system" evidence="1">
    <location>
        <position position="415"/>
    </location>
</feature>
<feature type="lipid moiety-binding region" description="N-palmitoyl cysteine" evidence="4">
    <location>
        <position position="53"/>
    </location>
</feature>
<dbReference type="EC" id="3.1.1.-" evidence="6"/>
<dbReference type="EMBL" id="AB006706">
    <property type="protein sequence ID" value="BAB09571.1"/>
    <property type="molecule type" value="Genomic_DNA"/>
</dbReference>
<dbReference type="EMBL" id="CP002688">
    <property type="protein sequence ID" value="AED92460.1"/>
    <property type="molecule type" value="Genomic_DNA"/>
</dbReference>
<dbReference type="RefSeq" id="NP_197274.1">
    <property type="nucleotide sequence ID" value="NM_121778.1"/>
</dbReference>
<dbReference type="STRING" id="3702.Q9FN79"/>
<dbReference type="ESTHER" id="arath-Q9FN79">
    <property type="family name" value="Bodyguard"/>
</dbReference>
<dbReference type="MEROPS" id="S33.A76"/>
<dbReference type="MetOSite" id="Q9FN79"/>
<dbReference type="PaxDb" id="3702-AT5G17720.1"/>
<dbReference type="EnsemblPlants" id="AT5G17720.1">
    <property type="protein sequence ID" value="AT5G17720.1"/>
    <property type="gene ID" value="AT5G17720"/>
</dbReference>
<dbReference type="GeneID" id="831639"/>
<dbReference type="Gramene" id="AT5G17720.1">
    <property type="protein sequence ID" value="AT5G17720.1"/>
    <property type="gene ID" value="AT5G17720"/>
</dbReference>
<dbReference type="KEGG" id="ath:AT5G17720"/>
<dbReference type="Araport" id="AT5G17720"/>
<dbReference type="TAIR" id="AT5G17720"/>
<dbReference type="eggNOG" id="KOG1454">
    <property type="taxonomic scope" value="Eukaryota"/>
</dbReference>
<dbReference type="HOGENOM" id="CLU_051935_0_0_1"/>
<dbReference type="InParanoid" id="Q9FN79"/>
<dbReference type="OMA" id="NCVSWTN"/>
<dbReference type="OrthoDB" id="284184at2759"/>
<dbReference type="PhylomeDB" id="Q9FN79"/>
<dbReference type="PRO" id="PR:Q9FN79"/>
<dbReference type="Proteomes" id="UP000006548">
    <property type="component" value="Chromosome 5"/>
</dbReference>
<dbReference type="ExpressionAtlas" id="Q9FN79">
    <property type="expression patterns" value="differential"/>
</dbReference>
<dbReference type="GO" id="GO:0005576">
    <property type="term" value="C:extracellular region"/>
    <property type="evidence" value="ECO:0007669"/>
    <property type="project" value="UniProtKB-KW"/>
</dbReference>
<dbReference type="GO" id="GO:0005886">
    <property type="term" value="C:plasma membrane"/>
    <property type="evidence" value="ECO:0007669"/>
    <property type="project" value="UniProtKB-SubCell"/>
</dbReference>
<dbReference type="GO" id="GO:0016787">
    <property type="term" value="F:hydrolase activity"/>
    <property type="evidence" value="ECO:0007669"/>
    <property type="project" value="UniProtKB-KW"/>
</dbReference>
<dbReference type="GO" id="GO:0071555">
    <property type="term" value="P:cell wall organization"/>
    <property type="evidence" value="ECO:0007669"/>
    <property type="project" value="UniProtKB-KW"/>
</dbReference>
<dbReference type="Gene3D" id="3.40.50.1820">
    <property type="entry name" value="alpha/beta hydrolase"/>
    <property type="match status" value="1"/>
</dbReference>
<dbReference type="InterPro" id="IPR000073">
    <property type="entry name" value="AB_hydrolase_1"/>
</dbReference>
<dbReference type="InterPro" id="IPR029058">
    <property type="entry name" value="AB_hydrolase_fold"/>
</dbReference>
<dbReference type="PANTHER" id="PTHR43689">
    <property type="entry name" value="HYDROLASE"/>
    <property type="match status" value="1"/>
</dbReference>
<dbReference type="PANTHER" id="PTHR43689:SF35">
    <property type="entry name" value="LYSOPHOSPHOLIPASE BODYGUARD 5-RELATED"/>
    <property type="match status" value="1"/>
</dbReference>
<dbReference type="Pfam" id="PF00561">
    <property type="entry name" value="Abhydrolase_1"/>
    <property type="match status" value="1"/>
</dbReference>
<dbReference type="SUPFAM" id="SSF53474">
    <property type="entry name" value="alpha/beta-Hydrolases"/>
    <property type="match status" value="1"/>
</dbReference>
<name>BDG5_ARATH</name>
<evidence type="ECO:0000250" key="1">
    <source>
        <dbReference type="UniProtKB" id="P04180"/>
    </source>
</evidence>
<evidence type="ECO:0000250" key="2">
    <source>
        <dbReference type="UniProtKB" id="Q8LFX7"/>
    </source>
</evidence>
<evidence type="ECO:0000255" key="3"/>
<evidence type="ECO:0000255" key="4">
    <source>
        <dbReference type="PROSITE-ProRule" id="PRU00303"/>
    </source>
</evidence>
<evidence type="ECO:0000303" key="5">
    <source>
    </source>
</evidence>
<evidence type="ECO:0000305" key="6"/>
<evidence type="ECO:0000312" key="7">
    <source>
        <dbReference type="Araport" id="AT5G17720"/>
    </source>
</evidence>
<evidence type="ECO:0000312" key="8">
    <source>
        <dbReference type="EMBL" id="BAB09571.1"/>
    </source>
</evidence>
<accession>Q9FN79</accession>
<comment type="function">
    <text evidence="2">Involved in cuticle development and morphogenesis.</text>
</comment>
<comment type="subcellular location">
    <subcellularLocation>
        <location evidence="3">Cell membrane</location>
        <topology evidence="3">Lipid-anchor</topology>
    </subcellularLocation>
    <subcellularLocation>
        <location evidence="2">Secreted</location>
        <location evidence="2">Cell wall</location>
    </subcellularLocation>
</comment>